<organism>
    <name type="scientific">Lactobacillus acidophilus (strain ATCC 700396 / NCK56 / N2 / NCFM)</name>
    <dbReference type="NCBI Taxonomy" id="272621"/>
    <lineage>
        <taxon>Bacteria</taxon>
        <taxon>Bacillati</taxon>
        <taxon>Bacillota</taxon>
        <taxon>Bacilli</taxon>
        <taxon>Lactobacillales</taxon>
        <taxon>Lactobacillaceae</taxon>
        <taxon>Lactobacillus</taxon>
    </lineage>
</organism>
<sequence length="120" mass="12493">MALDTEKIIEELKGASILELNDLVKAIEDEFDVTAAAPVAAAGAAGAAEAKSSFDVELTEAGQEKVKVIKVVRDITGLGLKDSKDLVDGAPKNVKEGVSEDEANDIKAKLEEVGATVTLK</sequence>
<proteinExistence type="inferred from homology"/>
<gene>
    <name evidence="1" type="primary">rplL</name>
    <name type="ordered locus">LBA0370</name>
</gene>
<name>RL7_LACAC</name>
<accession>Q5FM12</accession>
<protein>
    <recommendedName>
        <fullName evidence="1">Large ribosomal subunit protein bL12</fullName>
    </recommendedName>
    <alternativeName>
        <fullName evidence="2">50S ribosomal protein L7/L12</fullName>
    </alternativeName>
</protein>
<feature type="chain" id="PRO_0000243436" description="Large ribosomal subunit protein bL12">
    <location>
        <begin position="1"/>
        <end position="120"/>
    </location>
</feature>
<reference key="1">
    <citation type="journal article" date="2005" name="Proc. Natl. Acad. Sci. U.S.A.">
        <title>Complete genome sequence of the probiotic lactic acid bacterium Lactobacillus acidophilus NCFM.</title>
        <authorList>
            <person name="Altermann E."/>
            <person name="Russell W.M."/>
            <person name="Azcarate-Peril M.A."/>
            <person name="Barrangou R."/>
            <person name="Buck B.L."/>
            <person name="McAuliffe O."/>
            <person name="Souther N."/>
            <person name="Dobson A."/>
            <person name="Duong T."/>
            <person name="Callanan M."/>
            <person name="Lick S."/>
            <person name="Hamrick A."/>
            <person name="Cano R."/>
            <person name="Klaenhammer T.R."/>
        </authorList>
    </citation>
    <scope>NUCLEOTIDE SEQUENCE [LARGE SCALE GENOMIC DNA]</scope>
    <source>
        <strain>ATCC 700396 / NCK56 / N2 / NCFM</strain>
    </source>
</reference>
<evidence type="ECO:0000255" key="1">
    <source>
        <dbReference type="HAMAP-Rule" id="MF_00368"/>
    </source>
</evidence>
<evidence type="ECO:0000305" key="2"/>
<keyword id="KW-1185">Reference proteome</keyword>
<keyword id="KW-0687">Ribonucleoprotein</keyword>
<keyword id="KW-0689">Ribosomal protein</keyword>
<dbReference type="EMBL" id="CP000033">
    <property type="protein sequence ID" value="AAV42262.1"/>
    <property type="molecule type" value="Genomic_DNA"/>
</dbReference>
<dbReference type="RefSeq" id="WP_011254128.1">
    <property type="nucleotide sequence ID" value="NC_006814.3"/>
</dbReference>
<dbReference type="RefSeq" id="YP_193293.1">
    <property type="nucleotide sequence ID" value="NC_006814.3"/>
</dbReference>
<dbReference type="SMR" id="Q5FM12"/>
<dbReference type="STRING" id="272621.LBA0370"/>
<dbReference type="GeneID" id="93290530"/>
<dbReference type="KEGG" id="lac:LBA0370"/>
<dbReference type="PATRIC" id="fig|272621.13.peg.357"/>
<dbReference type="eggNOG" id="COG0222">
    <property type="taxonomic scope" value="Bacteria"/>
</dbReference>
<dbReference type="HOGENOM" id="CLU_086499_3_2_9"/>
<dbReference type="OrthoDB" id="9811748at2"/>
<dbReference type="BioCyc" id="LACI272621:G1G49-365-MONOMER"/>
<dbReference type="Proteomes" id="UP000006381">
    <property type="component" value="Chromosome"/>
</dbReference>
<dbReference type="GO" id="GO:0022625">
    <property type="term" value="C:cytosolic large ribosomal subunit"/>
    <property type="evidence" value="ECO:0007669"/>
    <property type="project" value="TreeGrafter"/>
</dbReference>
<dbReference type="GO" id="GO:0003729">
    <property type="term" value="F:mRNA binding"/>
    <property type="evidence" value="ECO:0007669"/>
    <property type="project" value="TreeGrafter"/>
</dbReference>
<dbReference type="GO" id="GO:0003735">
    <property type="term" value="F:structural constituent of ribosome"/>
    <property type="evidence" value="ECO:0007669"/>
    <property type="project" value="InterPro"/>
</dbReference>
<dbReference type="GO" id="GO:0006412">
    <property type="term" value="P:translation"/>
    <property type="evidence" value="ECO:0007669"/>
    <property type="project" value="UniProtKB-UniRule"/>
</dbReference>
<dbReference type="CDD" id="cd00387">
    <property type="entry name" value="Ribosomal_L7_L12"/>
    <property type="match status" value="1"/>
</dbReference>
<dbReference type="FunFam" id="3.30.1390.10:FF:000001">
    <property type="entry name" value="50S ribosomal protein L7/L12"/>
    <property type="match status" value="1"/>
</dbReference>
<dbReference type="Gene3D" id="3.30.1390.10">
    <property type="match status" value="1"/>
</dbReference>
<dbReference type="Gene3D" id="1.20.5.710">
    <property type="entry name" value="Single helix bin"/>
    <property type="match status" value="1"/>
</dbReference>
<dbReference type="HAMAP" id="MF_00368">
    <property type="entry name" value="Ribosomal_bL12"/>
    <property type="match status" value="1"/>
</dbReference>
<dbReference type="InterPro" id="IPR000206">
    <property type="entry name" value="Ribosomal_bL12"/>
</dbReference>
<dbReference type="InterPro" id="IPR013823">
    <property type="entry name" value="Ribosomal_bL12_C"/>
</dbReference>
<dbReference type="InterPro" id="IPR014719">
    <property type="entry name" value="Ribosomal_bL12_C/ClpS-like"/>
</dbReference>
<dbReference type="InterPro" id="IPR008932">
    <property type="entry name" value="Ribosomal_bL12_oligo"/>
</dbReference>
<dbReference type="InterPro" id="IPR036235">
    <property type="entry name" value="Ribosomal_bL12_oligo_N_sf"/>
</dbReference>
<dbReference type="NCBIfam" id="TIGR00855">
    <property type="entry name" value="L12"/>
    <property type="match status" value="1"/>
</dbReference>
<dbReference type="PANTHER" id="PTHR45987">
    <property type="entry name" value="39S RIBOSOMAL PROTEIN L12"/>
    <property type="match status" value="1"/>
</dbReference>
<dbReference type="PANTHER" id="PTHR45987:SF4">
    <property type="entry name" value="LARGE RIBOSOMAL SUBUNIT PROTEIN BL12M"/>
    <property type="match status" value="1"/>
</dbReference>
<dbReference type="Pfam" id="PF00542">
    <property type="entry name" value="Ribosomal_L12"/>
    <property type="match status" value="1"/>
</dbReference>
<dbReference type="Pfam" id="PF16320">
    <property type="entry name" value="Ribosomal_L12_N"/>
    <property type="match status" value="1"/>
</dbReference>
<dbReference type="SUPFAM" id="SSF54736">
    <property type="entry name" value="ClpS-like"/>
    <property type="match status" value="1"/>
</dbReference>
<dbReference type="SUPFAM" id="SSF48300">
    <property type="entry name" value="Ribosomal protein L7/12, oligomerisation (N-terminal) domain"/>
    <property type="match status" value="1"/>
</dbReference>
<comment type="function">
    <text evidence="1">Forms part of the ribosomal stalk which helps the ribosome interact with GTP-bound translation factors. Is thus essential for accurate translation.</text>
</comment>
<comment type="subunit">
    <text evidence="1">Homodimer. Part of the ribosomal stalk of the 50S ribosomal subunit. Forms a multimeric L10(L12)X complex, where L10 forms an elongated spine to which 2 to 4 L12 dimers bind in a sequential fashion. Binds GTP-bound translation factors.</text>
</comment>
<comment type="similarity">
    <text evidence="1">Belongs to the bacterial ribosomal protein bL12 family.</text>
</comment>